<sequence length="333" mass="35134">MNLYRRYGWELTLAALLVLEILLFGLSNSRMLDINVLLFSTSDFICIGIVALPLTMVIVSGGIDISFGSTIGLCAIFLGIVFQAGVPMSVAIPLTVLVGALCGLINAGLILYTGVNPLVITLGTLYLFGGSALLLSGLSGATGYEGIGGFPAAFTDFANQTLFGLPIPLVIFMLCVLLFWLLMHRTHSGRHVFLIGQSSRVARYSALPIARTLCMLYAMTGVASAISAILLVSYFGSARSDLGASFLMPAITAVVLGGANIYGGSGSILGTALAVLLVGYLQQGLQMIGTPNQISSALSGALLILVVVGRSISLHRHLIYEWLQRRRSRKASA</sequence>
<dbReference type="EMBL" id="CP000308">
    <property type="protein sequence ID" value="ABG15836.1"/>
    <property type="molecule type" value="Genomic_DNA"/>
</dbReference>
<dbReference type="RefSeq" id="WP_002209190.1">
    <property type="nucleotide sequence ID" value="NZ_CP009906.1"/>
</dbReference>
<dbReference type="GeneID" id="57974200"/>
<dbReference type="KEGG" id="ypa:YPA_3875"/>
<dbReference type="Proteomes" id="UP000001971">
    <property type="component" value="Chromosome"/>
</dbReference>
<dbReference type="GO" id="GO:0005886">
    <property type="term" value="C:plasma membrane"/>
    <property type="evidence" value="ECO:0007669"/>
    <property type="project" value="UniProtKB-SubCell"/>
</dbReference>
<dbReference type="GO" id="GO:0022857">
    <property type="term" value="F:transmembrane transporter activity"/>
    <property type="evidence" value="ECO:0007669"/>
    <property type="project" value="InterPro"/>
</dbReference>
<dbReference type="CDD" id="cd06579">
    <property type="entry name" value="TM_PBP1_transp_AraH_like"/>
    <property type="match status" value="1"/>
</dbReference>
<dbReference type="InterPro" id="IPR001851">
    <property type="entry name" value="ABC_transp_permease"/>
</dbReference>
<dbReference type="NCBIfam" id="NF011612">
    <property type="entry name" value="PRK15038.1"/>
    <property type="match status" value="1"/>
</dbReference>
<dbReference type="PANTHER" id="PTHR32196">
    <property type="entry name" value="ABC TRANSPORTER PERMEASE PROTEIN YPHD-RELATED-RELATED"/>
    <property type="match status" value="1"/>
</dbReference>
<dbReference type="PANTHER" id="PTHR32196:SF71">
    <property type="entry name" value="AUTOINDUCER 2 IMPORT SYSTEM PERMEASE PROTEIN LSRD"/>
    <property type="match status" value="1"/>
</dbReference>
<dbReference type="Pfam" id="PF02653">
    <property type="entry name" value="BPD_transp_2"/>
    <property type="match status" value="1"/>
</dbReference>
<proteinExistence type="inferred from homology"/>
<name>LSRD_YERPA</name>
<evidence type="ECO:0000250" key="1"/>
<evidence type="ECO:0000255" key="2"/>
<evidence type="ECO:0000305" key="3"/>
<protein>
    <recommendedName>
        <fullName>Autoinducer 2 import system permease protein LsrD</fullName>
        <shortName>AI-2 import system permease protein LsrD</shortName>
    </recommendedName>
</protein>
<feature type="chain" id="PRO_0000351383" description="Autoinducer 2 import system permease protein LsrD">
    <location>
        <begin position="1"/>
        <end position="333"/>
    </location>
</feature>
<feature type="transmembrane region" description="Helical" evidence="2">
    <location>
        <begin position="7"/>
        <end position="27"/>
    </location>
</feature>
<feature type="transmembrane region" description="Helical" evidence="2">
    <location>
        <begin position="45"/>
        <end position="65"/>
    </location>
</feature>
<feature type="transmembrane region" description="Helical" evidence="2">
    <location>
        <begin position="67"/>
        <end position="87"/>
    </location>
</feature>
<feature type="transmembrane region" description="Helical" evidence="2">
    <location>
        <begin position="90"/>
        <end position="110"/>
    </location>
</feature>
<feature type="transmembrane region" description="Helical" evidence="2">
    <location>
        <begin position="118"/>
        <end position="138"/>
    </location>
</feature>
<feature type="transmembrane region" description="Helical" evidence="2">
    <location>
        <begin position="162"/>
        <end position="182"/>
    </location>
</feature>
<feature type="transmembrane region" description="Helical" evidence="2">
    <location>
        <begin position="212"/>
        <end position="232"/>
    </location>
</feature>
<feature type="transmembrane region" description="Helical" evidence="2">
    <location>
        <begin position="240"/>
        <end position="260"/>
    </location>
</feature>
<feature type="transmembrane region" description="Helical" evidence="2">
    <location>
        <begin position="261"/>
        <end position="281"/>
    </location>
</feature>
<feature type="transmembrane region" description="Helical" evidence="2">
    <location>
        <begin position="288"/>
        <end position="308"/>
    </location>
</feature>
<gene>
    <name type="primary">lsrD</name>
    <name type="ordered locus">YPA_3875</name>
</gene>
<reference key="1">
    <citation type="journal article" date="2006" name="J. Bacteriol.">
        <title>Complete genome sequence of Yersinia pestis strains Antiqua and Nepal516: evidence of gene reduction in an emerging pathogen.</title>
        <authorList>
            <person name="Chain P.S.G."/>
            <person name="Hu P."/>
            <person name="Malfatti S.A."/>
            <person name="Radnedge L."/>
            <person name="Larimer F."/>
            <person name="Vergez L.M."/>
            <person name="Worsham P."/>
            <person name="Chu M.C."/>
            <person name="Andersen G.L."/>
        </authorList>
    </citation>
    <scope>NUCLEOTIDE SEQUENCE [LARGE SCALE GENOMIC DNA]</scope>
    <source>
        <strain>Antiqua</strain>
    </source>
</reference>
<keyword id="KW-0997">Cell inner membrane</keyword>
<keyword id="KW-1003">Cell membrane</keyword>
<keyword id="KW-0472">Membrane</keyword>
<keyword id="KW-0812">Transmembrane</keyword>
<keyword id="KW-1133">Transmembrane helix</keyword>
<keyword id="KW-0813">Transport</keyword>
<organism>
    <name type="scientific">Yersinia pestis bv. Antiqua (strain Antiqua)</name>
    <dbReference type="NCBI Taxonomy" id="360102"/>
    <lineage>
        <taxon>Bacteria</taxon>
        <taxon>Pseudomonadati</taxon>
        <taxon>Pseudomonadota</taxon>
        <taxon>Gammaproteobacteria</taxon>
        <taxon>Enterobacterales</taxon>
        <taxon>Yersiniaceae</taxon>
        <taxon>Yersinia</taxon>
    </lineage>
</organism>
<comment type="function">
    <text evidence="1">Part of the ABC transporter complex LsrABCD involved in autoinducer 2 (AI-2) import. Probably responsible for the translocation of the substrate across the membrane (By similarity).</text>
</comment>
<comment type="subunit">
    <text evidence="1">The complex is composed of two ATP-binding proteins (LsrA), two transmembrane proteins (LsrC and LsrD) and a solute-binding protein (LsrB).</text>
</comment>
<comment type="subcellular location">
    <subcellularLocation>
        <location evidence="1">Cell inner membrane</location>
        <topology evidence="1">Multi-pass membrane protein</topology>
    </subcellularLocation>
</comment>
<comment type="similarity">
    <text evidence="3">Belongs to the binding-protein-dependent transport system permease family. AraH/RbsC subfamily.</text>
</comment>
<accession>Q1C136</accession>